<evidence type="ECO:0000255" key="1">
    <source>
        <dbReference type="HAMAP-Rule" id="MF_00171"/>
    </source>
</evidence>
<keyword id="KW-0413">Isomerase</keyword>
<keyword id="KW-0819">tRNA processing</keyword>
<sequence>MRIALGIQYDGAAFCGWQSQPHGKTVQDALERSLAEFAQTSLHTTVAGRTDTGVHGLGQVVHFDTDLDRADFSWVRGTNAFLPPTVAVQWAKPMPDTFHARFAAFERTYYYALYVHPVRSPMLAGRAGWVHTPLDVDAMREAAAHLVGEHDFSAFRSSECQAKSPVKHLYQIGIRPDGDFIHFRFRANAFLHHMVRNLMGCLVAVGRGRYPSSWLAEVLESRDRDCAAPTFMPEGLYLAHVGYPAEFAVPPAQLGSVPWSSVWADLDGRT</sequence>
<proteinExistence type="inferred from homology"/>
<accession>A3P7N2</accession>
<organism>
    <name type="scientific">Burkholderia pseudomallei (strain 1106a)</name>
    <dbReference type="NCBI Taxonomy" id="357348"/>
    <lineage>
        <taxon>Bacteria</taxon>
        <taxon>Pseudomonadati</taxon>
        <taxon>Pseudomonadota</taxon>
        <taxon>Betaproteobacteria</taxon>
        <taxon>Burkholderiales</taxon>
        <taxon>Burkholderiaceae</taxon>
        <taxon>Burkholderia</taxon>
        <taxon>pseudomallei group</taxon>
    </lineage>
</organism>
<gene>
    <name evidence="1" type="primary">truA</name>
    <name type="ordered locus">BURPS1106A_A2309</name>
</gene>
<name>TRUA_BURP0</name>
<protein>
    <recommendedName>
        <fullName evidence="1">tRNA pseudouridine synthase A</fullName>
        <ecNumber evidence="1">5.4.99.12</ecNumber>
    </recommendedName>
    <alternativeName>
        <fullName evidence="1">tRNA pseudouridine(38-40) synthase</fullName>
    </alternativeName>
    <alternativeName>
        <fullName evidence="1">tRNA pseudouridylate synthase I</fullName>
    </alternativeName>
    <alternativeName>
        <fullName evidence="1">tRNA-uridine isomerase I</fullName>
    </alternativeName>
</protein>
<feature type="chain" id="PRO_1000017056" description="tRNA pseudouridine synthase A">
    <location>
        <begin position="1"/>
        <end position="270"/>
    </location>
</feature>
<feature type="active site" description="Nucleophile" evidence="1">
    <location>
        <position position="51"/>
    </location>
</feature>
<feature type="binding site" evidence="1">
    <location>
        <position position="109"/>
    </location>
    <ligand>
        <name>substrate</name>
    </ligand>
</feature>
<comment type="function">
    <text evidence="1">Formation of pseudouridine at positions 38, 39 and 40 in the anticodon stem and loop of transfer RNAs.</text>
</comment>
<comment type="catalytic activity">
    <reaction evidence="1">
        <text>uridine(38/39/40) in tRNA = pseudouridine(38/39/40) in tRNA</text>
        <dbReference type="Rhea" id="RHEA:22376"/>
        <dbReference type="Rhea" id="RHEA-COMP:10085"/>
        <dbReference type="Rhea" id="RHEA-COMP:10087"/>
        <dbReference type="ChEBI" id="CHEBI:65314"/>
        <dbReference type="ChEBI" id="CHEBI:65315"/>
        <dbReference type="EC" id="5.4.99.12"/>
    </reaction>
</comment>
<comment type="subunit">
    <text evidence="1">Homodimer.</text>
</comment>
<comment type="similarity">
    <text evidence="1">Belongs to the tRNA pseudouridine synthase TruA family.</text>
</comment>
<reference key="1">
    <citation type="journal article" date="2010" name="Genome Biol. Evol.">
        <title>Continuing evolution of Burkholderia mallei through genome reduction and large-scale rearrangements.</title>
        <authorList>
            <person name="Losada L."/>
            <person name="Ronning C.M."/>
            <person name="DeShazer D."/>
            <person name="Woods D."/>
            <person name="Fedorova N."/>
            <person name="Kim H.S."/>
            <person name="Shabalina S.A."/>
            <person name="Pearson T.R."/>
            <person name="Brinkac L."/>
            <person name="Tan P."/>
            <person name="Nandi T."/>
            <person name="Crabtree J."/>
            <person name="Badger J."/>
            <person name="Beckstrom-Sternberg S."/>
            <person name="Saqib M."/>
            <person name="Schutzer S.E."/>
            <person name="Keim P."/>
            <person name="Nierman W.C."/>
        </authorList>
    </citation>
    <scope>NUCLEOTIDE SEQUENCE [LARGE SCALE GENOMIC DNA]</scope>
    <source>
        <strain>1106a</strain>
    </source>
</reference>
<dbReference type="EC" id="5.4.99.12" evidence="1"/>
<dbReference type="EMBL" id="CP000573">
    <property type="protein sequence ID" value="ABN93209.1"/>
    <property type="molecule type" value="Genomic_DNA"/>
</dbReference>
<dbReference type="RefSeq" id="WP_004203245.1">
    <property type="nucleotide sequence ID" value="NC_009078.1"/>
</dbReference>
<dbReference type="SMR" id="A3P7N2"/>
<dbReference type="GeneID" id="93063899"/>
<dbReference type="KEGG" id="bpl:BURPS1106A_A2309"/>
<dbReference type="HOGENOM" id="CLU_014673_0_2_4"/>
<dbReference type="Proteomes" id="UP000006738">
    <property type="component" value="Chromosome II"/>
</dbReference>
<dbReference type="GO" id="GO:0003723">
    <property type="term" value="F:RNA binding"/>
    <property type="evidence" value="ECO:0007669"/>
    <property type="project" value="InterPro"/>
</dbReference>
<dbReference type="GO" id="GO:0160147">
    <property type="term" value="F:tRNA pseudouridine(38-40) synthase activity"/>
    <property type="evidence" value="ECO:0007669"/>
    <property type="project" value="UniProtKB-EC"/>
</dbReference>
<dbReference type="GO" id="GO:0031119">
    <property type="term" value="P:tRNA pseudouridine synthesis"/>
    <property type="evidence" value="ECO:0007669"/>
    <property type="project" value="UniProtKB-UniRule"/>
</dbReference>
<dbReference type="CDD" id="cd02570">
    <property type="entry name" value="PseudoU_synth_EcTruA"/>
    <property type="match status" value="1"/>
</dbReference>
<dbReference type="FunFam" id="3.30.70.580:FF:000001">
    <property type="entry name" value="tRNA pseudouridine synthase A"/>
    <property type="match status" value="1"/>
</dbReference>
<dbReference type="Gene3D" id="3.30.70.660">
    <property type="entry name" value="Pseudouridine synthase I, catalytic domain, C-terminal subdomain"/>
    <property type="match status" value="1"/>
</dbReference>
<dbReference type="Gene3D" id="3.30.70.580">
    <property type="entry name" value="Pseudouridine synthase I, catalytic domain, N-terminal subdomain"/>
    <property type="match status" value="1"/>
</dbReference>
<dbReference type="HAMAP" id="MF_00171">
    <property type="entry name" value="TruA"/>
    <property type="match status" value="1"/>
</dbReference>
<dbReference type="InterPro" id="IPR020103">
    <property type="entry name" value="PsdUridine_synth_cat_dom_sf"/>
</dbReference>
<dbReference type="InterPro" id="IPR001406">
    <property type="entry name" value="PsdUridine_synth_TruA"/>
</dbReference>
<dbReference type="InterPro" id="IPR020097">
    <property type="entry name" value="PsdUridine_synth_TruA_a/b_dom"/>
</dbReference>
<dbReference type="InterPro" id="IPR020095">
    <property type="entry name" value="PsdUridine_synth_TruA_C"/>
</dbReference>
<dbReference type="InterPro" id="IPR020094">
    <property type="entry name" value="TruA/RsuA/RluB/E/F_N"/>
</dbReference>
<dbReference type="NCBIfam" id="TIGR00071">
    <property type="entry name" value="hisT_truA"/>
    <property type="match status" value="1"/>
</dbReference>
<dbReference type="PANTHER" id="PTHR11142">
    <property type="entry name" value="PSEUDOURIDYLATE SYNTHASE"/>
    <property type="match status" value="1"/>
</dbReference>
<dbReference type="PANTHER" id="PTHR11142:SF0">
    <property type="entry name" value="TRNA PSEUDOURIDINE SYNTHASE-LIKE 1"/>
    <property type="match status" value="1"/>
</dbReference>
<dbReference type="Pfam" id="PF01416">
    <property type="entry name" value="PseudoU_synth_1"/>
    <property type="match status" value="2"/>
</dbReference>
<dbReference type="PIRSF" id="PIRSF001430">
    <property type="entry name" value="tRNA_psdUrid_synth"/>
    <property type="match status" value="1"/>
</dbReference>
<dbReference type="SUPFAM" id="SSF55120">
    <property type="entry name" value="Pseudouridine synthase"/>
    <property type="match status" value="1"/>
</dbReference>